<accession>A4RC23</accession>
<accession>G4NJ88</accession>
<accession>Q2KG77</accession>
<protein>
    <recommendedName>
        <fullName>Nascent polypeptide-associated complex subunit beta</fullName>
        <shortName>NAC-beta</shortName>
    </recommendedName>
    <alternativeName>
        <fullName>Beta-NAC</fullName>
    </alternativeName>
</protein>
<comment type="function">
    <text evidence="1">Component of the nascent polypeptide-associated complex (NAC), a dynamic component of the ribosomal exit tunnel, protecting the emerging polypeptides from interaction with other cytoplasmic proteins to ensure appropriate nascent protein targeting. The NAC complex also promotes mitochondrial protein import by enhancing productive ribosome interactions with the outer mitochondrial membrane and blocks the inappropriate interaction of ribosomes translating non-secretory nascent polypeptides with translocation sites in the membrane of the endoplasmic reticulum. EGD1 may act as a transcription factor that exert a negative effect on the expression of several genes that are transcribed by RNA polymerase II.</text>
</comment>
<comment type="subunit">
    <text evidence="1">Part of the nascent polypeptide-associated complex (NAC), consisting of EGD2 and EGD1. NAC associates with ribosomes via EGD1 (By similarity).</text>
</comment>
<comment type="subcellular location">
    <subcellularLocation>
        <location evidence="1">Cytoplasm</location>
    </subcellularLocation>
    <subcellularLocation>
        <location evidence="1">Nucleus</location>
    </subcellularLocation>
    <text evidence="1">Predominantly cytoplasmic, may also transiently localize to the nucleus.</text>
</comment>
<comment type="similarity">
    <text evidence="4">Belongs to the NAC-beta family.</text>
</comment>
<comment type="sequence caution" evidence="4">
    <conflict type="erroneous gene model prediction">
        <sequence resource="EMBL-CDS" id="EAQ71051"/>
    </conflict>
</comment>
<organism>
    <name type="scientific">Pyricularia oryzae (strain 70-15 / ATCC MYA-4617 / FGSC 8958)</name>
    <name type="common">Rice blast fungus</name>
    <name type="synonym">Magnaporthe oryzae</name>
    <dbReference type="NCBI Taxonomy" id="242507"/>
    <lineage>
        <taxon>Eukaryota</taxon>
        <taxon>Fungi</taxon>
        <taxon>Dikarya</taxon>
        <taxon>Ascomycota</taxon>
        <taxon>Pezizomycotina</taxon>
        <taxon>Sordariomycetes</taxon>
        <taxon>Sordariomycetidae</taxon>
        <taxon>Magnaporthales</taxon>
        <taxon>Pyriculariaceae</taxon>
        <taxon>Pyricularia</taxon>
    </lineage>
</organism>
<feature type="chain" id="PRO_0000294530" description="Nascent polypeptide-associated complex subunit beta">
    <location>
        <begin position="1"/>
        <end position="172"/>
    </location>
</feature>
<feature type="domain" description="NAC-A/B" evidence="2">
    <location>
        <begin position="54"/>
        <end position="119"/>
    </location>
</feature>
<feature type="region of interest" description="Disordered" evidence="3">
    <location>
        <begin position="36"/>
        <end position="58"/>
    </location>
</feature>
<feature type="region of interest" description="Disordered" evidence="3">
    <location>
        <begin position="142"/>
        <end position="172"/>
    </location>
</feature>
<feature type="compositionally biased region" description="Basic residues" evidence="3">
    <location>
        <begin position="41"/>
        <end position="50"/>
    </location>
</feature>
<keyword id="KW-0963">Cytoplasm</keyword>
<keyword id="KW-0539">Nucleus</keyword>
<keyword id="KW-0653">Protein transport</keyword>
<keyword id="KW-1185">Reference proteome</keyword>
<keyword id="KW-0678">Repressor</keyword>
<keyword id="KW-0804">Transcription</keyword>
<keyword id="KW-0805">Transcription regulation</keyword>
<keyword id="KW-0813">Transport</keyword>
<reference key="1">
    <citation type="submission" date="2005-01" db="EMBL/GenBank/DDBJ databases">
        <title>The sequence of Magnaporthe grisea chromosome 7.</title>
        <authorList>
            <person name="Thon M.R."/>
            <person name="Pan H."/>
            <person name="Diener A."/>
            <person name="Papalas J."/>
            <person name="Taro A."/>
            <person name="Mitchell T.K."/>
            <person name="Dean R.A."/>
        </authorList>
    </citation>
    <scope>NUCLEOTIDE SEQUENCE [LARGE SCALE GENOMIC DNA]</scope>
    <source>
        <strain>70-15 / ATCC MYA-4617 / FGSC 8958</strain>
    </source>
</reference>
<reference key="2">
    <citation type="journal article" date="2005" name="Nature">
        <title>The genome sequence of the rice blast fungus Magnaporthe grisea.</title>
        <authorList>
            <person name="Dean R.A."/>
            <person name="Talbot N.J."/>
            <person name="Ebbole D.J."/>
            <person name="Farman M.L."/>
            <person name="Mitchell T.K."/>
            <person name="Orbach M.J."/>
            <person name="Thon M.R."/>
            <person name="Kulkarni R."/>
            <person name="Xu J.-R."/>
            <person name="Pan H."/>
            <person name="Read N.D."/>
            <person name="Lee Y.-H."/>
            <person name="Carbone I."/>
            <person name="Brown D."/>
            <person name="Oh Y.Y."/>
            <person name="Donofrio N."/>
            <person name="Jeong J.S."/>
            <person name="Soanes D.M."/>
            <person name="Djonovic S."/>
            <person name="Kolomiets E."/>
            <person name="Rehmeyer C."/>
            <person name="Li W."/>
            <person name="Harding M."/>
            <person name="Kim S."/>
            <person name="Lebrun M.-H."/>
            <person name="Bohnert H."/>
            <person name="Coughlan S."/>
            <person name="Butler J."/>
            <person name="Calvo S.E."/>
            <person name="Ma L.-J."/>
            <person name="Nicol R."/>
            <person name="Purcell S."/>
            <person name="Nusbaum C."/>
            <person name="Galagan J.E."/>
            <person name="Birren B.W."/>
        </authorList>
    </citation>
    <scope>NUCLEOTIDE SEQUENCE [LARGE SCALE GENOMIC DNA]</scope>
    <source>
        <strain>70-15 / ATCC MYA-4617 / FGSC 8958</strain>
    </source>
</reference>
<dbReference type="EMBL" id="CM000230">
    <property type="protein sequence ID" value="EAQ71051.1"/>
    <property type="status" value="ALT_SEQ"/>
    <property type="molecule type" value="Genomic_DNA"/>
</dbReference>
<dbReference type="EMBL" id="CM001237">
    <property type="protein sequence ID" value="EHA46304.1"/>
    <property type="molecule type" value="Genomic_DNA"/>
</dbReference>
<dbReference type="RefSeq" id="XP_003721047.1">
    <property type="nucleotide sequence ID" value="XM_003720999.1"/>
</dbReference>
<dbReference type="SMR" id="A4RC23"/>
<dbReference type="FunCoup" id="A4RC23">
    <property type="interactions" value="1231"/>
</dbReference>
<dbReference type="STRING" id="242507.A4RC23"/>
<dbReference type="EnsemblFungi" id="MGG_02713T0">
    <property type="protein sequence ID" value="MGG_02713T0"/>
    <property type="gene ID" value="MGG_02713"/>
</dbReference>
<dbReference type="GeneID" id="2682313"/>
<dbReference type="KEGG" id="mgr:MGG_02713"/>
<dbReference type="VEuPathDB" id="FungiDB:MGG_02713"/>
<dbReference type="eggNOG" id="KOG2240">
    <property type="taxonomic scope" value="Eukaryota"/>
</dbReference>
<dbReference type="HOGENOM" id="CLU_098726_2_1_1"/>
<dbReference type="InParanoid" id="A4RC23"/>
<dbReference type="OMA" id="AGDTYME"/>
<dbReference type="OrthoDB" id="8033832at2759"/>
<dbReference type="Proteomes" id="UP000009058">
    <property type="component" value="Chromosome 7"/>
</dbReference>
<dbReference type="GO" id="GO:0005829">
    <property type="term" value="C:cytosol"/>
    <property type="evidence" value="ECO:0000250"/>
    <property type="project" value="PAMGO_MGG"/>
</dbReference>
<dbReference type="GO" id="GO:0005854">
    <property type="term" value="C:nascent polypeptide-associated complex"/>
    <property type="evidence" value="ECO:0000250"/>
    <property type="project" value="PAMGO_MGG"/>
</dbReference>
<dbReference type="GO" id="GO:0005634">
    <property type="term" value="C:nucleus"/>
    <property type="evidence" value="ECO:0000250"/>
    <property type="project" value="PAMGO_MGG"/>
</dbReference>
<dbReference type="GO" id="GO:0051082">
    <property type="term" value="F:unfolded protein binding"/>
    <property type="evidence" value="ECO:0000250"/>
    <property type="project" value="PAMGO_MGG"/>
</dbReference>
<dbReference type="GO" id="GO:0051083">
    <property type="term" value="P:'de novo' cotranslational protein folding"/>
    <property type="evidence" value="ECO:0000250"/>
    <property type="project" value="PAMGO_MGG"/>
</dbReference>
<dbReference type="GO" id="GO:0015031">
    <property type="term" value="P:protein transport"/>
    <property type="evidence" value="ECO:0007669"/>
    <property type="project" value="UniProtKB-KW"/>
</dbReference>
<dbReference type="CDD" id="cd22055">
    <property type="entry name" value="NAC_BTF3"/>
    <property type="match status" value="1"/>
</dbReference>
<dbReference type="FunFam" id="2.20.70.30:FF:000003">
    <property type="entry name" value="Nascent polypeptide-associated complex subunit beta"/>
    <property type="match status" value="1"/>
</dbReference>
<dbReference type="Gene3D" id="2.20.70.30">
    <property type="entry name" value="Nascent polypeptide-associated complex domain"/>
    <property type="match status" value="1"/>
</dbReference>
<dbReference type="InterPro" id="IPR039370">
    <property type="entry name" value="BTF3"/>
</dbReference>
<dbReference type="InterPro" id="IPR038187">
    <property type="entry name" value="NAC_A/B_dom_sf"/>
</dbReference>
<dbReference type="InterPro" id="IPR002715">
    <property type="entry name" value="Nas_poly-pep-assoc_cplx_dom"/>
</dbReference>
<dbReference type="PANTHER" id="PTHR10351">
    <property type="entry name" value="TRANSCRIPTION FACTOR BTF3 FAMILY MEMBER"/>
    <property type="match status" value="1"/>
</dbReference>
<dbReference type="Pfam" id="PF01849">
    <property type="entry name" value="NAC"/>
    <property type="match status" value="1"/>
</dbReference>
<dbReference type="SMART" id="SM01407">
    <property type="entry name" value="NAC"/>
    <property type="match status" value="1"/>
</dbReference>
<dbReference type="PROSITE" id="PS51151">
    <property type="entry name" value="NAC_AB"/>
    <property type="match status" value="1"/>
</dbReference>
<proteinExistence type="inferred from homology"/>
<sequence>MADVQERLKKLGASARIGYVLVNFFFSQASIGSRWKTGKGTPRRKMKRAPARSGGDDKKLQQTLKKLNVQPIQAIEEVNMFKSDGNVIHFAAPKVHAAVPANTFAIYGNGEDKELTELVPGILNQLGPDSLASLRKLAESYQNMQKADGDKEADDDDIPDLVAGENFEDKVE</sequence>
<evidence type="ECO:0000250" key="1"/>
<evidence type="ECO:0000255" key="2">
    <source>
        <dbReference type="PROSITE-ProRule" id="PRU00507"/>
    </source>
</evidence>
<evidence type="ECO:0000256" key="3">
    <source>
        <dbReference type="SAM" id="MobiDB-lite"/>
    </source>
</evidence>
<evidence type="ECO:0000305" key="4"/>
<gene>
    <name type="primary">EGD1</name>
    <name type="ORF">MGCH7_ch7g458</name>
    <name type="ORF">MGG_02713</name>
</gene>
<name>NACB_PYRO7</name>